<sequence>MKLIFDIQLFAHKKAGGSTRNGRDSESKRLGVKRSDGQFVLAGNILVRQRGTKFHPGKNVGRGGDDTLFALVTGYVKFENKRGRKVVSVIPAEEMVAVQ</sequence>
<name>RL27_CALBD</name>
<dbReference type="EMBL" id="CP001393">
    <property type="protein sequence ID" value="ACM60221.1"/>
    <property type="molecule type" value="Genomic_DNA"/>
</dbReference>
<dbReference type="RefSeq" id="WP_013290701.1">
    <property type="nucleotide sequence ID" value="NC_012034.1"/>
</dbReference>
<dbReference type="SMR" id="B9MRB7"/>
<dbReference type="STRING" id="521460.Athe_1120"/>
<dbReference type="GeneID" id="31772470"/>
<dbReference type="KEGG" id="ate:Athe_1120"/>
<dbReference type="eggNOG" id="COG0211">
    <property type="taxonomic scope" value="Bacteria"/>
</dbReference>
<dbReference type="HOGENOM" id="CLU_095424_4_1_9"/>
<dbReference type="Proteomes" id="UP000007723">
    <property type="component" value="Chromosome"/>
</dbReference>
<dbReference type="GO" id="GO:0022625">
    <property type="term" value="C:cytosolic large ribosomal subunit"/>
    <property type="evidence" value="ECO:0007669"/>
    <property type="project" value="TreeGrafter"/>
</dbReference>
<dbReference type="GO" id="GO:0003735">
    <property type="term" value="F:structural constituent of ribosome"/>
    <property type="evidence" value="ECO:0007669"/>
    <property type="project" value="InterPro"/>
</dbReference>
<dbReference type="GO" id="GO:0006412">
    <property type="term" value="P:translation"/>
    <property type="evidence" value="ECO:0007669"/>
    <property type="project" value="UniProtKB-UniRule"/>
</dbReference>
<dbReference type="FunFam" id="2.40.50.100:FF:000020">
    <property type="entry name" value="50S ribosomal protein L27"/>
    <property type="match status" value="1"/>
</dbReference>
<dbReference type="Gene3D" id="2.40.50.100">
    <property type="match status" value="1"/>
</dbReference>
<dbReference type="HAMAP" id="MF_00539">
    <property type="entry name" value="Ribosomal_bL27"/>
    <property type="match status" value="1"/>
</dbReference>
<dbReference type="InterPro" id="IPR001684">
    <property type="entry name" value="Ribosomal_bL27"/>
</dbReference>
<dbReference type="InterPro" id="IPR018261">
    <property type="entry name" value="Ribosomal_bL27_CS"/>
</dbReference>
<dbReference type="NCBIfam" id="TIGR00062">
    <property type="entry name" value="L27"/>
    <property type="match status" value="1"/>
</dbReference>
<dbReference type="PANTHER" id="PTHR15893:SF0">
    <property type="entry name" value="LARGE RIBOSOMAL SUBUNIT PROTEIN BL27M"/>
    <property type="match status" value="1"/>
</dbReference>
<dbReference type="PANTHER" id="PTHR15893">
    <property type="entry name" value="RIBOSOMAL PROTEIN L27"/>
    <property type="match status" value="1"/>
</dbReference>
<dbReference type="Pfam" id="PF01016">
    <property type="entry name" value="Ribosomal_L27"/>
    <property type="match status" value="1"/>
</dbReference>
<dbReference type="PRINTS" id="PR00063">
    <property type="entry name" value="RIBOSOMALL27"/>
</dbReference>
<dbReference type="SUPFAM" id="SSF110324">
    <property type="entry name" value="Ribosomal L27 protein-like"/>
    <property type="match status" value="1"/>
</dbReference>
<dbReference type="PROSITE" id="PS00831">
    <property type="entry name" value="RIBOSOMAL_L27"/>
    <property type="match status" value="1"/>
</dbReference>
<accession>B9MRB7</accession>
<protein>
    <recommendedName>
        <fullName evidence="2">Large ribosomal subunit protein bL27</fullName>
    </recommendedName>
    <alternativeName>
        <fullName evidence="3">50S ribosomal protein L27</fullName>
    </alternativeName>
</protein>
<evidence type="ECO:0000250" key="1">
    <source>
        <dbReference type="UniProtKB" id="Q2FXT0"/>
    </source>
</evidence>
<evidence type="ECO:0000255" key="2">
    <source>
        <dbReference type="HAMAP-Rule" id="MF_00539"/>
    </source>
</evidence>
<evidence type="ECO:0000305" key="3"/>
<proteinExistence type="inferred from homology"/>
<gene>
    <name evidence="2" type="primary">rpmA</name>
    <name type="ordered locus">Athe_1120</name>
</gene>
<keyword id="KW-0687">Ribonucleoprotein</keyword>
<keyword id="KW-0689">Ribosomal protein</keyword>
<comment type="PTM">
    <text evidence="1">The N-terminus is cleaved by ribosomal processing cysteine protease Prp.</text>
</comment>
<comment type="similarity">
    <text evidence="2">Belongs to the bacterial ribosomal protein bL27 family.</text>
</comment>
<reference key="1">
    <citation type="submission" date="2009-01" db="EMBL/GenBank/DDBJ databases">
        <title>Complete sequence of chromosome of Caldicellulosiruptor becscii DSM 6725.</title>
        <authorList>
            <person name="Lucas S."/>
            <person name="Copeland A."/>
            <person name="Lapidus A."/>
            <person name="Glavina del Rio T."/>
            <person name="Tice H."/>
            <person name="Bruce D."/>
            <person name="Goodwin L."/>
            <person name="Pitluck S."/>
            <person name="Sims D."/>
            <person name="Meincke L."/>
            <person name="Brettin T."/>
            <person name="Detter J.C."/>
            <person name="Han C."/>
            <person name="Larimer F."/>
            <person name="Land M."/>
            <person name="Hauser L."/>
            <person name="Kyrpides N."/>
            <person name="Ovchinnikova G."/>
            <person name="Kataeva I."/>
            <person name="Adams M.W.W."/>
        </authorList>
    </citation>
    <scope>NUCLEOTIDE SEQUENCE [LARGE SCALE GENOMIC DNA]</scope>
    <source>
        <strain>ATCC BAA-1888 / DSM 6725 / KCTC 15123 / Z-1320</strain>
    </source>
</reference>
<organism>
    <name type="scientific">Caldicellulosiruptor bescii (strain ATCC BAA-1888 / DSM 6725 / KCTC 15123 / Z-1320)</name>
    <name type="common">Anaerocellum thermophilum</name>
    <dbReference type="NCBI Taxonomy" id="521460"/>
    <lineage>
        <taxon>Bacteria</taxon>
        <taxon>Bacillati</taxon>
        <taxon>Bacillota</taxon>
        <taxon>Bacillota incertae sedis</taxon>
        <taxon>Caldicellulosiruptorales</taxon>
        <taxon>Caldicellulosiruptoraceae</taxon>
        <taxon>Caldicellulosiruptor</taxon>
    </lineage>
</organism>
<feature type="propeptide" id="PRO_0000459843" evidence="1">
    <location>
        <begin position="1"/>
        <end position="10"/>
    </location>
</feature>
<feature type="chain" id="PRO_1000195870" description="Large ribosomal subunit protein bL27">
    <location>
        <begin position="11"/>
        <end position="99"/>
    </location>
</feature>